<comment type="function">
    <text evidence="2">Binds LDL, the major cholesterol-carrying lipoprotein of plasma, and transports it into cells by endocytosis. In order to be internalized, the receptor-ligand complexes must first cluster into clathrin-coated pits.</text>
</comment>
<comment type="subunit">
    <text evidence="8">Interacts with ldlrap1.</text>
</comment>
<comment type="subcellular location">
    <subcellularLocation>
        <location evidence="10">Cell membrane</location>
        <topology evidence="3">Single-pass type I membrane protein</topology>
    </subcellularLocation>
    <subcellularLocation>
        <location evidence="2">Membrane</location>
        <location evidence="2">Clathrin-coated pit</location>
    </subcellularLocation>
    <subcellularLocation>
        <location evidence="2">Golgi apparatus</location>
    </subcellularLocation>
    <subcellularLocation>
        <location evidence="2">Early endosome</location>
    </subcellularLocation>
    <subcellularLocation>
        <location evidence="2">Late endosome</location>
    </subcellularLocation>
    <subcellularLocation>
        <location evidence="2">Lysosome</location>
    </subcellularLocation>
    <text evidence="2">Rapidly endocytosed upon ligand binding.</text>
</comment>
<comment type="domain">
    <text evidence="2">The NPXY motif mediates the interaction with ldlrap1.</text>
</comment>
<comment type="similarity">
    <text evidence="9">Belongs to the LDLR family.</text>
</comment>
<protein>
    <recommendedName>
        <fullName>Low-density lipoprotein receptor 1</fullName>
        <shortName>LDL receptor 1</shortName>
    </recommendedName>
</protein>
<dbReference type="EMBL" id="M62976">
    <property type="protein sequence ID" value="AAA49897.1"/>
    <property type="molecule type" value="mRNA"/>
</dbReference>
<dbReference type="PIR" id="A40388">
    <property type="entry name" value="QRXLL1"/>
</dbReference>
<dbReference type="RefSeq" id="NP_001081290.1">
    <property type="nucleotide sequence ID" value="NM_001087821.1"/>
</dbReference>
<dbReference type="SMR" id="Q99087"/>
<dbReference type="GlyCosmos" id="Q99087">
    <property type="glycosylation" value="3 sites, No reported glycans"/>
</dbReference>
<dbReference type="GeneID" id="397757"/>
<dbReference type="KEGG" id="xla:397757"/>
<dbReference type="AGR" id="Xenbase:XB-GENE-6252601"/>
<dbReference type="CTD" id="397757"/>
<dbReference type="Xenbase" id="XB-GENE-6252601">
    <property type="gene designation" value="ldlr.L"/>
</dbReference>
<dbReference type="OrthoDB" id="664115at2759"/>
<dbReference type="Proteomes" id="UP000186698">
    <property type="component" value="Chromosome 3L"/>
</dbReference>
<dbReference type="Bgee" id="397757">
    <property type="expression patterns" value="Expressed in intestine and 19 other cell types or tissues"/>
</dbReference>
<dbReference type="GO" id="GO:0016324">
    <property type="term" value="C:apical plasma membrane"/>
    <property type="evidence" value="ECO:0007669"/>
    <property type="project" value="TreeGrafter"/>
</dbReference>
<dbReference type="GO" id="GO:0009986">
    <property type="term" value="C:cell surface"/>
    <property type="evidence" value="ECO:0000250"/>
    <property type="project" value="UniProtKB"/>
</dbReference>
<dbReference type="GO" id="GO:0005905">
    <property type="term" value="C:clathrin-coated pit"/>
    <property type="evidence" value="ECO:0007669"/>
    <property type="project" value="UniProtKB-SubCell"/>
</dbReference>
<dbReference type="GO" id="GO:0005769">
    <property type="term" value="C:early endosome"/>
    <property type="evidence" value="ECO:0000318"/>
    <property type="project" value="GO_Central"/>
</dbReference>
<dbReference type="GO" id="GO:0005794">
    <property type="term" value="C:Golgi apparatus"/>
    <property type="evidence" value="ECO:0007669"/>
    <property type="project" value="UniProtKB-SubCell"/>
</dbReference>
<dbReference type="GO" id="GO:0005770">
    <property type="term" value="C:late endosome"/>
    <property type="evidence" value="ECO:0007669"/>
    <property type="project" value="UniProtKB-SubCell"/>
</dbReference>
<dbReference type="GO" id="GO:0034362">
    <property type="term" value="C:low-density lipoprotein particle"/>
    <property type="evidence" value="ECO:0007669"/>
    <property type="project" value="UniProtKB-KW"/>
</dbReference>
<dbReference type="GO" id="GO:0005764">
    <property type="term" value="C:lysosome"/>
    <property type="evidence" value="ECO:0007669"/>
    <property type="project" value="UniProtKB-SubCell"/>
</dbReference>
<dbReference type="GO" id="GO:0005886">
    <property type="term" value="C:plasma membrane"/>
    <property type="evidence" value="ECO:0000318"/>
    <property type="project" value="GO_Central"/>
</dbReference>
<dbReference type="GO" id="GO:0043235">
    <property type="term" value="C:receptor complex"/>
    <property type="evidence" value="ECO:0007669"/>
    <property type="project" value="TreeGrafter"/>
</dbReference>
<dbReference type="GO" id="GO:0005509">
    <property type="term" value="F:calcium ion binding"/>
    <property type="evidence" value="ECO:0007669"/>
    <property type="project" value="InterPro"/>
</dbReference>
<dbReference type="GO" id="GO:0042562">
    <property type="term" value="F:hormone binding"/>
    <property type="evidence" value="ECO:0007669"/>
    <property type="project" value="TreeGrafter"/>
</dbReference>
<dbReference type="GO" id="GO:0071813">
    <property type="term" value="F:lipoprotein particle binding"/>
    <property type="evidence" value="ECO:0000318"/>
    <property type="project" value="GO_Central"/>
</dbReference>
<dbReference type="GO" id="GO:0005041">
    <property type="term" value="F:low-density lipoprotein particle receptor activity"/>
    <property type="evidence" value="ECO:0000318"/>
    <property type="project" value="GO_Central"/>
</dbReference>
<dbReference type="GO" id="GO:0042632">
    <property type="term" value="P:cholesterol homeostasis"/>
    <property type="evidence" value="ECO:0000318"/>
    <property type="project" value="GO_Central"/>
</dbReference>
<dbReference type="GO" id="GO:0008203">
    <property type="term" value="P:cholesterol metabolic process"/>
    <property type="evidence" value="ECO:0007669"/>
    <property type="project" value="UniProtKB-KW"/>
</dbReference>
<dbReference type="GO" id="GO:0090118">
    <property type="term" value="P:receptor-mediated endocytosis involved in cholesterol transport"/>
    <property type="evidence" value="ECO:0000318"/>
    <property type="project" value="GO_Central"/>
</dbReference>
<dbReference type="CDD" id="cd00054">
    <property type="entry name" value="EGF_CA"/>
    <property type="match status" value="1"/>
</dbReference>
<dbReference type="CDD" id="cd00112">
    <property type="entry name" value="LDLa"/>
    <property type="match status" value="7"/>
</dbReference>
<dbReference type="FunFam" id="4.10.400.10:FF:000162">
    <property type="entry name" value="LDL receptor related protein 8"/>
    <property type="match status" value="1"/>
</dbReference>
<dbReference type="FunFam" id="4.10.400.10:FF:000220">
    <property type="entry name" value="Lipophorin receptor 2, isoform A"/>
    <property type="match status" value="1"/>
</dbReference>
<dbReference type="FunFam" id="4.10.400.10:FF:000124">
    <property type="entry name" value="Low density lipoprotein receptor"/>
    <property type="match status" value="1"/>
</dbReference>
<dbReference type="FunFam" id="2.10.25.10:FF:000009">
    <property type="entry name" value="Low-density lipoprotein receptor isoform 1"/>
    <property type="match status" value="1"/>
</dbReference>
<dbReference type="FunFam" id="2.10.25.10:FF:000052">
    <property type="entry name" value="low-density lipoprotein receptor isoform X1"/>
    <property type="match status" value="1"/>
</dbReference>
<dbReference type="FunFam" id="2.120.10.30:FF:000002">
    <property type="entry name" value="low-density lipoprotein receptor isoform X1"/>
    <property type="match status" value="1"/>
</dbReference>
<dbReference type="FunFam" id="4.10.400.10:FF:000002">
    <property type="entry name" value="Low-density lipoprotein receptor-related protein 1"/>
    <property type="match status" value="1"/>
</dbReference>
<dbReference type="FunFam" id="4.10.400.10:FF:000113">
    <property type="entry name" value="Low-density lipoprotein receptor-related protein 8"/>
    <property type="match status" value="2"/>
</dbReference>
<dbReference type="FunFam" id="4.10.400.10:FF:000025">
    <property type="entry name" value="Very low density lipoprotein receptor"/>
    <property type="match status" value="1"/>
</dbReference>
<dbReference type="Gene3D" id="2.10.25.10">
    <property type="entry name" value="Laminin"/>
    <property type="match status" value="3"/>
</dbReference>
<dbReference type="Gene3D" id="4.10.400.10">
    <property type="entry name" value="Low-density Lipoprotein Receptor"/>
    <property type="match status" value="7"/>
</dbReference>
<dbReference type="Gene3D" id="2.120.10.30">
    <property type="entry name" value="TolB, C-terminal domain"/>
    <property type="match status" value="1"/>
</dbReference>
<dbReference type="InterPro" id="IPR011042">
    <property type="entry name" value="6-blade_b-propeller_TolB-like"/>
</dbReference>
<dbReference type="InterPro" id="IPR001881">
    <property type="entry name" value="EGF-like_Ca-bd_dom"/>
</dbReference>
<dbReference type="InterPro" id="IPR000742">
    <property type="entry name" value="EGF-like_dom"/>
</dbReference>
<dbReference type="InterPro" id="IPR000152">
    <property type="entry name" value="EGF-type_Asp/Asn_hydroxyl_site"/>
</dbReference>
<dbReference type="InterPro" id="IPR018097">
    <property type="entry name" value="EGF_Ca-bd_CS"/>
</dbReference>
<dbReference type="InterPro" id="IPR009030">
    <property type="entry name" value="Growth_fac_rcpt_cys_sf"/>
</dbReference>
<dbReference type="InterPro" id="IPR036055">
    <property type="entry name" value="LDL_receptor-like_sf"/>
</dbReference>
<dbReference type="InterPro" id="IPR051221">
    <property type="entry name" value="LDLR-related"/>
</dbReference>
<dbReference type="InterPro" id="IPR023415">
    <property type="entry name" value="LDLR_class-A_CS"/>
</dbReference>
<dbReference type="InterPro" id="IPR000033">
    <property type="entry name" value="LDLR_classB_rpt"/>
</dbReference>
<dbReference type="InterPro" id="IPR002172">
    <property type="entry name" value="LDrepeatLR_classA_rpt"/>
</dbReference>
<dbReference type="InterPro" id="IPR049883">
    <property type="entry name" value="NOTCH1_EGF-like"/>
</dbReference>
<dbReference type="PANTHER" id="PTHR22722:SF15">
    <property type="entry name" value="LOW-DENSITY LIPOPROTEIN RECEPTOR-RELATED"/>
    <property type="match status" value="1"/>
</dbReference>
<dbReference type="PANTHER" id="PTHR22722">
    <property type="entry name" value="LOW-DENSITY LIPOPROTEIN RECEPTOR-RELATED PROTEIN 2-RELATED"/>
    <property type="match status" value="1"/>
</dbReference>
<dbReference type="Pfam" id="PF07645">
    <property type="entry name" value="EGF_CA"/>
    <property type="match status" value="1"/>
</dbReference>
<dbReference type="Pfam" id="PF14670">
    <property type="entry name" value="FXa_inhibition"/>
    <property type="match status" value="2"/>
</dbReference>
<dbReference type="Pfam" id="PF00057">
    <property type="entry name" value="Ldl_recept_a"/>
    <property type="match status" value="7"/>
</dbReference>
<dbReference type="Pfam" id="PF00058">
    <property type="entry name" value="Ldl_recept_b"/>
    <property type="match status" value="5"/>
</dbReference>
<dbReference type="PRINTS" id="PR00261">
    <property type="entry name" value="LDLRECEPTOR"/>
</dbReference>
<dbReference type="SMART" id="SM00181">
    <property type="entry name" value="EGF"/>
    <property type="match status" value="3"/>
</dbReference>
<dbReference type="SMART" id="SM00179">
    <property type="entry name" value="EGF_CA"/>
    <property type="match status" value="2"/>
</dbReference>
<dbReference type="SMART" id="SM00192">
    <property type="entry name" value="LDLa"/>
    <property type="match status" value="7"/>
</dbReference>
<dbReference type="SMART" id="SM00135">
    <property type="entry name" value="LY"/>
    <property type="match status" value="5"/>
</dbReference>
<dbReference type="SUPFAM" id="SSF57184">
    <property type="entry name" value="Growth factor receptor domain"/>
    <property type="match status" value="1"/>
</dbReference>
<dbReference type="SUPFAM" id="SSF57424">
    <property type="entry name" value="LDL receptor-like module"/>
    <property type="match status" value="7"/>
</dbReference>
<dbReference type="SUPFAM" id="SSF63825">
    <property type="entry name" value="YWTD domain"/>
    <property type="match status" value="1"/>
</dbReference>
<dbReference type="PROSITE" id="PS00010">
    <property type="entry name" value="ASX_HYDROXYL"/>
    <property type="match status" value="2"/>
</dbReference>
<dbReference type="PROSITE" id="PS01186">
    <property type="entry name" value="EGF_2"/>
    <property type="match status" value="2"/>
</dbReference>
<dbReference type="PROSITE" id="PS50026">
    <property type="entry name" value="EGF_3"/>
    <property type="match status" value="2"/>
</dbReference>
<dbReference type="PROSITE" id="PS01187">
    <property type="entry name" value="EGF_CA"/>
    <property type="match status" value="1"/>
</dbReference>
<dbReference type="PROSITE" id="PS01209">
    <property type="entry name" value="LDLRA_1"/>
    <property type="match status" value="7"/>
</dbReference>
<dbReference type="PROSITE" id="PS50068">
    <property type="entry name" value="LDLRA_2"/>
    <property type="match status" value="7"/>
</dbReference>
<dbReference type="PROSITE" id="PS51120">
    <property type="entry name" value="LDLRB"/>
    <property type="match status" value="5"/>
</dbReference>
<feature type="signal peptide" evidence="3">
    <location>
        <begin position="1"/>
        <end position="21"/>
    </location>
</feature>
<feature type="chain" id="PRO_0000017315" description="Low-density lipoprotein receptor 1">
    <location>
        <begin position="22"/>
        <end position="909"/>
    </location>
</feature>
<feature type="topological domain" description="Extracellular" evidence="3">
    <location>
        <begin position="22"/>
        <end position="836"/>
    </location>
</feature>
<feature type="transmembrane region" description="Helical" evidence="4">
    <location>
        <begin position="837"/>
        <end position="858"/>
    </location>
</feature>
<feature type="topological domain" description="Cytoplasmic" evidence="2">
    <location>
        <begin position="859"/>
        <end position="909"/>
    </location>
</feature>
<feature type="domain" description="LDL-receptor class A 1" evidence="6">
    <location>
        <begin position="25"/>
        <end position="65"/>
    </location>
</feature>
<feature type="domain" description="LDL-receptor class A 2" evidence="6">
    <location>
        <begin position="66"/>
        <end position="106"/>
    </location>
</feature>
<feature type="domain" description="LDL-receptor class A 3" evidence="6">
    <location>
        <begin position="107"/>
        <end position="145"/>
    </location>
</feature>
<feature type="domain" description="LDL-receptor class A 4" evidence="6">
    <location>
        <begin position="146"/>
        <end position="185"/>
    </location>
</feature>
<feature type="domain" description="LDL-receptor class A 5" evidence="6">
    <location>
        <begin position="193"/>
        <end position="231"/>
    </location>
</feature>
<feature type="domain" description="LDL-receptor class A 6" evidence="6">
    <location>
        <begin position="232"/>
        <end position="270"/>
    </location>
</feature>
<feature type="domain" description="LDL-receptor class A 7" evidence="6">
    <location>
        <begin position="272"/>
        <end position="311"/>
    </location>
</feature>
<feature type="domain" description="EGF-like 1" evidence="5">
    <location>
        <begin position="312"/>
        <end position="351"/>
    </location>
</feature>
<feature type="domain" description="EGF-like 2; calcium-binding" evidence="5">
    <location>
        <begin position="352"/>
        <end position="391"/>
    </location>
</feature>
<feature type="repeat" description="LDL-receptor class B 1">
    <location>
        <begin position="395"/>
        <end position="436"/>
    </location>
</feature>
<feature type="repeat" description="LDL-receptor class B 2">
    <location>
        <begin position="437"/>
        <end position="483"/>
    </location>
</feature>
<feature type="repeat" description="LDL-receptor class B 3">
    <location>
        <begin position="484"/>
        <end position="526"/>
    </location>
</feature>
<feature type="repeat" description="LDL-receptor class B 4">
    <location>
        <begin position="527"/>
        <end position="570"/>
    </location>
</feature>
<feature type="repeat" description="LDL-receptor class B 5">
    <location>
        <begin position="571"/>
        <end position="613"/>
    </location>
</feature>
<feature type="repeat" description="LDL-receptor class B 6">
    <location>
        <begin position="614"/>
        <end position="656"/>
    </location>
</feature>
<feature type="domain" description="EGF-like 3" evidence="5">
    <location>
        <begin position="661"/>
        <end position="710"/>
    </location>
</feature>
<feature type="region of interest" description="Clustered O-linked oligosaccharides">
    <location>
        <begin position="717"/>
        <end position="813"/>
    </location>
</feature>
<feature type="region of interest" description="Disordered" evidence="7">
    <location>
        <begin position="717"/>
        <end position="792"/>
    </location>
</feature>
<feature type="short sequence motif" description="NPXY motif" evidence="2">
    <location>
        <begin position="871"/>
        <end position="876"/>
    </location>
</feature>
<feature type="compositionally biased region" description="Low complexity" evidence="7">
    <location>
        <begin position="718"/>
        <end position="771"/>
    </location>
</feature>
<feature type="compositionally biased region" description="Polar residues" evidence="7">
    <location>
        <begin position="778"/>
        <end position="792"/>
    </location>
</feature>
<feature type="glycosylation site" description="N-linked (GlcNAc...) asparagine" evidence="4">
    <location>
        <position position="97"/>
    </location>
</feature>
<feature type="glycosylation site" description="N-linked (GlcNAc...) asparagine" evidence="4">
    <location>
        <position position="270"/>
    </location>
</feature>
<feature type="glycosylation site" description="N-linked (GlcNAc...) asparagine" evidence="4">
    <location>
        <position position="459"/>
    </location>
</feature>
<feature type="disulfide bond" evidence="1">
    <location>
        <begin position="27"/>
        <end position="39"/>
    </location>
</feature>
<feature type="disulfide bond" evidence="1">
    <location>
        <begin position="34"/>
        <end position="52"/>
    </location>
</feature>
<feature type="disulfide bond" evidence="1">
    <location>
        <begin position="46"/>
        <end position="63"/>
    </location>
</feature>
<feature type="disulfide bond" evidence="1">
    <location>
        <begin position="68"/>
        <end position="82"/>
    </location>
</feature>
<feature type="disulfide bond" evidence="1">
    <location>
        <begin position="75"/>
        <end position="95"/>
    </location>
</feature>
<feature type="disulfide bond" evidence="1">
    <location>
        <begin position="89"/>
        <end position="104"/>
    </location>
</feature>
<feature type="disulfide bond" evidence="1">
    <location>
        <begin position="109"/>
        <end position="121"/>
    </location>
</feature>
<feature type="disulfide bond" evidence="1">
    <location>
        <begin position="116"/>
        <end position="134"/>
    </location>
</feature>
<feature type="disulfide bond" evidence="1">
    <location>
        <begin position="128"/>
        <end position="143"/>
    </location>
</feature>
<feature type="disulfide bond" evidence="1">
    <location>
        <begin position="148"/>
        <end position="161"/>
    </location>
</feature>
<feature type="disulfide bond" evidence="1">
    <location>
        <begin position="155"/>
        <end position="174"/>
    </location>
</feature>
<feature type="disulfide bond" evidence="1">
    <location>
        <begin position="168"/>
        <end position="183"/>
    </location>
</feature>
<feature type="disulfide bond" evidence="1">
    <location>
        <begin position="195"/>
        <end position="207"/>
    </location>
</feature>
<feature type="disulfide bond" evidence="1">
    <location>
        <begin position="202"/>
        <end position="220"/>
    </location>
</feature>
<feature type="disulfide bond" evidence="1">
    <location>
        <begin position="214"/>
        <end position="229"/>
    </location>
</feature>
<feature type="disulfide bond" evidence="1">
    <location>
        <begin position="234"/>
        <end position="246"/>
    </location>
</feature>
<feature type="disulfide bond" evidence="1">
    <location>
        <begin position="241"/>
        <end position="259"/>
    </location>
</feature>
<feature type="disulfide bond" evidence="1">
    <location>
        <begin position="253"/>
        <end position="268"/>
    </location>
</feature>
<feature type="disulfide bond" evidence="1">
    <location>
        <begin position="274"/>
        <end position="287"/>
    </location>
</feature>
<feature type="disulfide bond" evidence="1">
    <location>
        <begin position="282"/>
        <end position="300"/>
    </location>
</feature>
<feature type="disulfide bond" evidence="1">
    <location>
        <begin position="294"/>
        <end position="311"/>
    </location>
</feature>
<feature type="disulfide bond" evidence="1">
    <location>
        <begin position="316"/>
        <end position="327"/>
    </location>
</feature>
<feature type="disulfide bond" evidence="1">
    <location>
        <begin position="323"/>
        <end position="336"/>
    </location>
</feature>
<feature type="disulfide bond" evidence="1">
    <location>
        <begin position="338"/>
        <end position="350"/>
    </location>
</feature>
<feature type="disulfide bond" evidence="1">
    <location>
        <begin position="356"/>
        <end position="366"/>
    </location>
</feature>
<feature type="disulfide bond" evidence="1">
    <location>
        <begin position="362"/>
        <end position="375"/>
    </location>
</feature>
<feature type="disulfide bond" evidence="1">
    <location>
        <begin position="377"/>
        <end position="390"/>
    </location>
</feature>
<feature type="disulfide bond" evidence="1">
    <location>
        <begin position="665"/>
        <end position="679"/>
    </location>
</feature>
<feature type="disulfide bond" evidence="1">
    <location>
        <begin position="675"/>
        <end position="694"/>
    </location>
</feature>
<feature type="disulfide bond" evidence="1">
    <location>
        <begin position="696"/>
        <end position="709"/>
    </location>
</feature>
<sequence>MMKPAASFPLLLLGLCHVSAISGIRKCDRNEFQCGDGKCIPYKWICDGSAECKDSSDESPETCREVTCGTDQFSCGGRLNRCIPMSWKCDGQTDCENGSDENDCTHKVCADDQFTCRSGKCISLDFVCDEDLDCDDGSDESYCPAPTCNPAMFQCKDKGICIPKLWACDGDPDCEDGSDEEHCEGREPIKTDKPCSPLEFHCGSGECIHMSWKCDGGFDCKDKSDEKDCVKPTCRPDQFQCNTGTCIHGSRQCDREYDCKDLSDEEGCVNVTKCEGPDVFKCRSGECITMDKVCNKKRDCRDWSDEPLKECGENECLRNNGGCSHICNDLKIGYECLCNEGYRLVDQKRCEDINECENPNTCSQICINLVGGYKCECREGYQMDPVTASCKSIGTVAYLFFTNRHEVRKMTLDRSEYTSVIPRLKNVVALDMEIASNKIYWSDLTQRKIYSASMEKADNTSHHETVISNQIQAPDGIAVDWIHGNIYWTDSKFSTISVANTEGSKRRTPPSDDLEKPRDIVVDPSQGFMYWTDWGLPAKIEKGGLNGVDRYPLVTENIEWPNGITLDLINQRLYWVDSKLHSLSCIDVTGENRRTVISDETHLAHPFGLTIFEDLVFWTDIENEAIFSANRLTGRNIMKVAEDLLSPEDIVLYHNLRQPKAENWCEAHHLGNGGCEYLCLPAPHITARSPKFTCACPDGMHLGDDMRSCVKEPVIPEASPTTTTSAPVTTTTSAPVTTTTSAPVTTTSTTARPTSRSTTLAKITSTTSTLAPQRPKMASTTIAPQRPTTNSPKTTLRMITEKVPDHTTQQPMTHSQLADNNFAKAGVVENVRSHPTALYIVLPIVILCLVAFGGFLVWKNWRLKNTNSINFDNPVYQKTTEEDQVHICRSQDGYTYPSRQMVSLEDDIA</sequence>
<gene>
    <name type="primary">ldlr-a</name>
    <name type="synonym">ldlr1</name>
</gene>
<organism>
    <name type="scientific">Xenopus laevis</name>
    <name type="common">African clawed frog</name>
    <dbReference type="NCBI Taxonomy" id="8355"/>
    <lineage>
        <taxon>Eukaryota</taxon>
        <taxon>Metazoa</taxon>
        <taxon>Chordata</taxon>
        <taxon>Craniata</taxon>
        <taxon>Vertebrata</taxon>
        <taxon>Euteleostomi</taxon>
        <taxon>Amphibia</taxon>
        <taxon>Batrachia</taxon>
        <taxon>Anura</taxon>
        <taxon>Pipoidea</taxon>
        <taxon>Pipidae</taxon>
        <taxon>Xenopodinae</taxon>
        <taxon>Xenopus</taxon>
        <taxon>Xenopus</taxon>
    </lineage>
</organism>
<name>LDLR1_XENLA</name>
<evidence type="ECO:0000250" key="1"/>
<evidence type="ECO:0000250" key="2">
    <source>
        <dbReference type="UniProtKB" id="P01130"/>
    </source>
</evidence>
<evidence type="ECO:0000250" key="3">
    <source>
        <dbReference type="UniProtKB" id="P01131"/>
    </source>
</evidence>
<evidence type="ECO:0000255" key="4"/>
<evidence type="ECO:0000255" key="5">
    <source>
        <dbReference type="PROSITE-ProRule" id="PRU00076"/>
    </source>
</evidence>
<evidence type="ECO:0000255" key="6">
    <source>
        <dbReference type="PROSITE-ProRule" id="PRU00124"/>
    </source>
</evidence>
<evidence type="ECO:0000256" key="7">
    <source>
        <dbReference type="SAM" id="MobiDB-lite"/>
    </source>
</evidence>
<evidence type="ECO:0000269" key="8">
    <source>
    </source>
</evidence>
<evidence type="ECO:0000305" key="9"/>
<evidence type="ECO:0000305" key="10">
    <source>
    </source>
</evidence>
<accession>Q99087</accession>
<proteinExistence type="evidence at protein level"/>
<keyword id="KW-1003">Cell membrane</keyword>
<keyword id="KW-0153">Cholesterol metabolism</keyword>
<keyword id="KW-0168">Coated pit</keyword>
<keyword id="KW-1015">Disulfide bond</keyword>
<keyword id="KW-0245">EGF-like domain</keyword>
<keyword id="KW-0254">Endocytosis</keyword>
<keyword id="KW-0967">Endosome</keyword>
<keyword id="KW-0325">Glycoprotein</keyword>
<keyword id="KW-0333">Golgi apparatus</keyword>
<keyword id="KW-0427">LDL</keyword>
<keyword id="KW-0443">Lipid metabolism</keyword>
<keyword id="KW-0445">Lipid transport</keyword>
<keyword id="KW-0458">Lysosome</keyword>
<keyword id="KW-0472">Membrane</keyword>
<keyword id="KW-0675">Receptor</keyword>
<keyword id="KW-1185">Reference proteome</keyword>
<keyword id="KW-0677">Repeat</keyword>
<keyword id="KW-0732">Signal</keyword>
<keyword id="KW-0753">Steroid metabolism</keyword>
<keyword id="KW-1207">Sterol metabolism</keyword>
<keyword id="KW-0812">Transmembrane</keyword>
<keyword id="KW-1133">Transmembrane helix</keyword>
<keyword id="KW-0813">Transport</keyword>
<reference key="1">
    <citation type="journal article" date="1991" name="J. Biol. Chem.">
        <title>The low density lipoprotein receptor in Xenopus laevis. I. Five domains that resemble the human receptor.</title>
        <authorList>
            <person name="Mehta K.D."/>
            <person name="Chen W.J."/>
            <person name="Goldstein J.L."/>
            <person name="Brown M.S."/>
        </authorList>
    </citation>
    <scope>NUCLEOTIDE SEQUENCE [MRNA]</scope>
    <scope>INTERACTION WITH LDLRAP1</scope>
    <scope>SUBCELLULAR LOCATION</scope>
    <source>
        <tissue>Liver</tissue>
        <tissue>Oocyte</tissue>
    </source>
</reference>